<organism>
    <name type="scientific">Pseudoalteromonas translucida (strain TAC 125)</name>
    <dbReference type="NCBI Taxonomy" id="326442"/>
    <lineage>
        <taxon>Bacteria</taxon>
        <taxon>Pseudomonadati</taxon>
        <taxon>Pseudomonadota</taxon>
        <taxon>Gammaproteobacteria</taxon>
        <taxon>Alteromonadales</taxon>
        <taxon>Pseudoalteromonadaceae</taxon>
        <taxon>Pseudoalteromonas</taxon>
    </lineage>
</organism>
<gene>
    <name evidence="1" type="primary">uppP2</name>
    <name type="ordered locus">PSHAb0269</name>
</gene>
<name>UPPP2_PSET1</name>
<protein>
    <recommendedName>
        <fullName evidence="1">Undecaprenyl-diphosphatase 2</fullName>
        <ecNumber evidence="1">3.6.1.27</ecNumber>
    </recommendedName>
    <alternativeName>
        <fullName evidence="1">Bacitracin resistance protein 2</fullName>
    </alternativeName>
    <alternativeName>
        <fullName evidence="1">Undecaprenyl pyrophosphate phosphatase 2</fullName>
    </alternativeName>
</protein>
<keyword id="KW-0046">Antibiotic resistance</keyword>
<keyword id="KW-0997">Cell inner membrane</keyword>
<keyword id="KW-1003">Cell membrane</keyword>
<keyword id="KW-0133">Cell shape</keyword>
<keyword id="KW-0961">Cell wall biogenesis/degradation</keyword>
<keyword id="KW-0378">Hydrolase</keyword>
<keyword id="KW-0472">Membrane</keyword>
<keyword id="KW-0573">Peptidoglycan synthesis</keyword>
<keyword id="KW-1185">Reference proteome</keyword>
<keyword id="KW-0812">Transmembrane</keyword>
<keyword id="KW-1133">Transmembrane helix</keyword>
<evidence type="ECO:0000255" key="1">
    <source>
        <dbReference type="HAMAP-Rule" id="MF_01006"/>
    </source>
</evidence>
<dbReference type="EC" id="3.6.1.27" evidence="1"/>
<dbReference type="EMBL" id="CR954247">
    <property type="protein sequence ID" value="CAI89310.1"/>
    <property type="molecule type" value="Genomic_DNA"/>
</dbReference>
<dbReference type="SMR" id="Q3IDA4"/>
<dbReference type="STRING" id="326442.PSHAb0269"/>
<dbReference type="KEGG" id="pha:PSHAb0269"/>
<dbReference type="PATRIC" id="fig|326442.8.peg.3179"/>
<dbReference type="eggNOG" id="COG1968">
    <property type="taxonomic scope" value="Bacteria"/>
</dbReference>
<dbReference type="HOGENOM" id="CLU_060296_2_0_6"/>
<dbReference type="BioCyc" id="PHAL326442:PSHA_RS16145-MONOMER"/>
<dbReference type="Proteomes" id="UP000006843">
    <property type="component" value="Chromosome II"/>
</dbReference>
<dbReference type="GO" id="GO:0005886">
    <property type="term" value="C:plasma membrane"/>
    <property type="evidence" value="ECO:0007669"/>
    <property type="project" value="UniProtKB-SubCell"/>
</dbReference>
<dbReference type="GO" id="GO:0050380">
    <property type="term" value="F:undecaprenyl-diphosphatase activity"/>
    <property type="evidence" value="ECO:0007669"/>
    <property type="project" value="UniProtKB-UniRule"/>
</dbReference>
<dbReference type="GO" id="GO:0071555">
    <property type="term" value="P:cell wall organization"/>
    <property type="evidence" value="ECO:0007669"/>
    <property type="project" value="UniProtKB-KW"/>
</dbReference>
<dbReference type="GO" id="GO:0009252">
    <property type="term" value="P:peptidoglycan biosynthetic process"/>
    <property type="evidence" value="ECO:0007669"/>
    <property type="project" value="UniProtKB-KW"/>
</dbReference>
<dbReference type="GO" id="GO:0008360">
    <property type="term" value="P:regulation of cell shape"/>
    <property type="evidence" value="ECO:0007669"/>
    <property type="project" value="UniProtKB-KW"/>
</dbReference>
<dbReference type="GO" id="GO:0046677">
    <property type="term" value="P:response to antibiotic"/>
    <property type="evidence" value="ECO:0007669"/>
    <property type="project" value="UniProtKB-UniRule"/>
</dbReference>
<dbReference type="HAMAP" id="MF_01006">
    <property type="entry name" value="Undec_diphosphatase"/>
    <property type="match status" value="1"/>
</dbReference>
<dbReference type="InterPro" id="IPR003824">
    <property type="entry name" value="UppP"/>
</dbReference>
<dbReference type="NCBIfam" id="NF001389">
    <property type="entry name" value="PRK00281.1-2"/>
    <property type="match status" value="1"/>
</dbReference>
<dbReference type="NCBIfam" id="NF001390">
    <property type="entry name" value="PRK00281.1-4"/>
    <property type="match status" value="1"/>
</dbReference>
<dbReference type="PANTHER" id="PTHR30622">
    <property type="entry name" value="UNDECAPRENYL-DIPHOSPHATASE"/>
    <property type="match status" value="1"/>
</dbReference>
<dbReference type="PANTHER" id="PTHR30622:SF3">
    <property type="entry name" value="UNDECAPRENYL-DIPHOSPHATASE"/>
    <property type="match status" value="1"/>
</dbReference>
<dbReference type="Pfam" id="PF02673">
    <property type="entry name" value="BacA"/>
    <property type="match status" value="1"/>
</dbReference>
<feature type="chain" id="PRO_0000227628" description="Undecaprenyl-diphosphatase 2">
    <location>
        <begin position="1"/>
        <end position="256"/>
    </location>
</feature>
<feature type="transmembrane region" description="Helical" evidence="1">
    <location>
        <begin position="1"/>
        <end position="21"/>
    </location>
</feature>
<feature type="transmembrane region" description="Helical" evidence="1">
    <location>
        <begin position="38"/>
        <end position="58"/>
    </location>
</feature>
<feature type="transmembrane region" description="Helical" evidence="1">
    <location>
        <begin position="70"/>
        <end position="90"/>
    </location>
</feature>
<feature type="transmembrane region" description="Helical" evidence="1">
    <location>
        <begin position="97"/>
        <end position="117"/>
    </location>
</feature>
<feature type="transmembrane region" description="Helical" evidence="1">
    <location>
        <begin position="134"/>
        <end position="154"/>
    </location>
</feature>
<feature type="transmembrane region" description="Helical" evidence="1">
    <location>
        <begin position="175"/>
        <end position="195"/>
    </location>
</feature>
<feature type="transmembrane region" description="Helical" evidence="1">
    <location>
        <begin position="208"/>
        <end position="228"/>
    </location>
</feature>
<feature type="transmembrane region" description="Helical" evidence="1">
    <location>
        <begin position="236"/>
        <end position="256"/>
    </location>
</feature>
<comment type="function">
    <text evidence="1">Catalyzes the dephosphorylation of undecaprenyl diphosphate (UPP). Confers resistance to bacitracin.</text>
</comment>
<comment type="catalytic activity">
    <reaction evidence="1">
        <text>di-trans,octa-cis-undecaprenyl diphosphate + H2O = di-trans,octa-cis-undecaprenyl phosphate + phosphate + H(+)</text>
        <dbReference type="Rhea" id="RHEA:28094"/>
        <dbReference type="ChEBI" id="CHEBI:15377"/>
        <dbReference type="ChEBI" id="CHEBI:15378"/>
        <dbReference type="ChEBI" id="CHEBI:43474"/>
        <dbReference type="ChEBI" id="CHEBI:58405"/>
        <dbReference type="ChEBI" id="CHEBI:60392"/>
        <dbReference type="EC" id="3.6.1.27"/>
    </reaction>
</comment>
<comment type="subcellular location">
    <subcellularLocation>
        <location evidence="1">Cell inner membrane</location>
        <topology evidence="1">Multi-pass membrane protein</topology>
    </subcellularLocation>
</comment>
<comment type="miscellaneous">
    <text>Bacitracin is thought to be involved in the inhibition of peptidoglycan synthesis by sequestering undecaprenyl diphosphate, thereby reducing the pool of lipid carrier available.</text>
</comment>
<comment type="similarity">
    <text evidence="1">Belongs to the UppP family.</text>
</comment>
<accession>Q3IDA4</accession>
<proteinExistence type="inferred from homology"/>
<reference key="1">
    <citation type="journal article" date="2005" name="Genome Res.">
        <title>Coping with cold: the genome of the versatile marine Antarctica bacterium Pseudoalteromonas haloplanktis TAC125.</title>
        <authorList>
            <person name="Medigue C."/>
            <person name="Krin E."/>
            <person name="Pascal G."/>
            <person name="Barbe V."/>
            <person name="Bernsel A."/>
            <person name="Bertin P.N."/>
            <person name="Cheung F."/>
            <person name="Cruveiller S."/>
            <person name="D'Amico S."/>
            <person name="Duilio A."/>
            <person name="Fang G."/>
            <person name="Feller G."/>
            <person name="Ho C."/>
            <person name="Mangenot S."/>
            <person name="Marino G."/>
            <person name="Nilsson J."/>
            <person name="Parrilli E."/>
            <person name="Rocha E.P.C."/>
            <person name="Rouy Z."/>
            <person name="Sekowska A."/>
            <person name="Tutino M.L."/>
            <person name="Vallenet D."/>
            <person name="von Heijne G."/>
            <person name="Danchin A."/>
        </authorList>
    </citation>
    <scope>NUCLEOTIDE SEQUENCE [LARGE SCALE GENOMIC DNA]</scope>
    <source>
        <strain>TAC 125</strain>
    </source>
</reference>
<sequence>MDIFNAIILGIIEGITEFLPISSTGHIIVAAQWLGIEATATNQAFGVIIQLAAILAVLANYKDKFTPKHLNLWIKVAIAFIPLGIIAFIFSDVIKALFNVPVVGVMFIVGGVIFLLLERNYKEQNCTTTDVTQVTYKQAIWIGIAQVFALIPGTSRAGSSIVGAMLCGLNRKASAEFSFLLGLPVLAAASGYDLLKHYDLFTFDDLTALAVGFVTSFIVAYFTIKLFIRFLENFTFVSFGIYRIVFGVILLTIAYV</sequence>